<name>DPP8_MOUSE</name>
<keyword id="KW-0031">Aminopeptidase</keyword>
<keyword id="KW-0963">Cytoplasm</keyword>
<keyword id="KW-0378">Hydrolase</keyword>
<keyword id="KW-0645">Protease</keyword>
<keyword id="KW-1185">Reference proteome</keyword>
<keyword id="KW-0720">Serine protease</keyword>
<accession>Q80YA7</accession>
<accession>Q9D4G6</accession>
<reference key="1">
    <citation type="journal article" date="2005" name="Science">
        <title>The transcriptional landscape of the mammalian genome.</title>
        <authorList>
            <person name="Carninci P."/>
            <person name="Kasukawa T."/>
            <person name="Katayama S."/>
            <person name="Gough J."/>
            <person name="Frith M.C."/>
            <person name="Maeda N."/>
            <person name="Oyama R."/>
            <person name="Ravasi T."/>
            <person name="Lenhard B."/>
            <person name="Wells C."/>
            <person name="Kodzius R."/>
            <person name="Shimokawa K."/>
            <person name="Bajic V.B."/>
            <person name="Brenner S.E."/>
            <person name="Batalov S."/>
            <person name="Forrest A.R."/>
            <person name="Zavolan M."/>
            <person name="Davis M.J."/>
            <person name="Wilming L.G."/>
            <person name="Aidinis V."/>
            <person name="Allen J.E."/>
            <person name="Ambesi-Impiombato A."/>
            <person name="Apweiler R."/>
            <person name="Aturaliya R.N."/>
            <person name="Bailey T.L."/>
            <person name="Bansal M."/>
            <person name="Baxter L."/>
            <person name="Beisel K.W."/>
            <person name="Bersano T."/>
            <person name="Bono H."/>
            <person name="Chalk A.M."/>
            <person name="Chiu K.P."/>
            <person name="Choudhary V."/>
            <person name="Christoffels A."/>
            <person name="Clutterbuck D.R."/>
            <person name="Crowe M.L."/>
            <person name="Dalla E."/>
            <person name="Dalrymple B.P."/>
            <person name="de Bono B."/>
            <person name="Della Gatta G."/>
            <person name="di Bernardo D."/>
            <person name="Down T."/>
            <person name="Engstrom P."/>
            <person name="Fagiolini M."/>
            <person name="Faulkner G."/>
            <person name="Fletcher C.F."/>
            <person name="Fukushima T."/>
            <person name="Furuno M."/>
            <person name="Futaki S."/>
            <person name="Gariboldi M."/>
            <person name="Georgii-Hemming P."/>
            <person name="Gingeras T.R."/>
            <person name="Gojobori T."/>
            <person name="Green R.E."/>
            <person name="Gustincich S."/>
            <person name="Harbers M."/>
            <person name="Hayashi Y."/>
            <person name="Hensch T.K."/>
            <person name="Hirokawa N."/>
            <person name="Hill D."/>
            <person name="Huminiecki L."/>
            <person name="Iacono M."/>
            <person name="Ikeo K."/>
            <person name="Iwama A."/>
            <person name="Ishikawa T."/>
            <person name="Jakt M."/>
            <person name="Kanapin A."/>
            <person name="Katoh M."/>
            <person name="Kawasawa Y."/>
            <person name="Kelso J."/>
            <person name="Kitamura H."/>
            <person name="Kitano H."/>
            <person name="Kollias G."/>
            <person name="Krishnan S.P."/>
            <person name="Kruger A."/>
            <person name="Kummerfeld S.K."/>
            <person name="Kurochkin I.V."/>
            <person name="Lareau L.F."/>
            <person name="Lazarevic D."/>
            <person name="Lipovich L."/>
            <person name="Liu J."/>
            <person name="Liuni S."/>
            <person name="McWilliam S."/>
            <person name="Madan Babu M."/>
            <person name="Madera M."/>
            <person name="Marchionni L."/>
            <person name="Matsuda H."/>
            <person name="Matsuzawa S."/>
            <person name="Miki H."/>
            <person name="Mignone F."/>
            <person name="Miyake S."/>
            <person name="Morris K."/>
            <person name="Mottagui-Tabar S."/>
            <person name="Mulder N."/>
            <person name="Nakano N."/>
            <person name="Nakauchi H."/>
            <person name="Ng P."/>
            <person name="Nilsson R."/>
            <person name="Nishiguchi S."/>
            <person name="Nishikawa S."/>
            <person name="Nori F."/>
            <person name="Ohara O."/>
            <person name="Okazaki Y."/>
            <person name="Orlando V."/>
            <person name="Pang K.C."/>
            <person name="Pavan W.J."/>
            <person name="Pavesi G."/>
            <person name="Pesole G."/>
            <person name="Petrovsky N."/>
            <person name="Piazza S."/>
            <person name="Reed J."/>
            <person name="Reid J.F."/>
            <person name="Ring B.Z."/>
            <person name="Ringwald M."/>
            <person name="Rost B."/>
            <person name="Ruan Y."/>
            <person name="Salzberg S.L."/>
            <person name="Sandelin A."/>
            <person name="Schneider C."/>
            <person name="Schoenbach C."/>
            <person name="Sekiguchi K."/>
            <person name="Semple C.A."/>
            <person name="Seno S."/>
            <person name="Sessa L."/>
            <person name="Sheng Y."/>
            <person name="Shibata Y."/>
            <person name="Shimada H."/>
            <person name="Shimada K."/>
            <person name="Silva D."/>
            <person name="Sinclair B."/>
            <person name="Sperling S."/>
            <person name="Stupka E."/>
            <person name="Sugiura K."/>
            <person name="Sultana R."/>
            <person name="Takenaka Y."/>
            <person name="Taki K."/>
            <person name="Tammoja K."/>
            <person name="Tan S.L."/>
            <person name="Tang S."/>
            <person name="Taylor M.S."/>
            <person name="Tegner J."/>
            <person name="Teichmann S.A."/>
            <person name="Ueda H.R."/>
            <person name="van Nimwegen E."/>
            <person name="Verardo R."/>
            <person name="Wei C.L."/>
            <person name="Yagi K."/>
            <person name="Yamanishi H."/>
            <person name="Zabarovsky E."/>
            <person name="Zhu S."/>
            <person name="Zimmer A."/>
            <person name="Hide W."/>
            <person name="Bult C."/>
            <person name="Grimmond S.M."/>
            <person name="Teasdale R.D."/>
            <person name="Liu E.T."/>
            <person name="Brusic V."/>
            <person name="Quackenbush J."/>
            <person name="Wahlestedt C."/>
            <person name="Mattick J.S."/>
            <person name="Hume D.A."/>
            <person name="Kai C."/>
            <person name="Sasaki D."/>
            <person name="Tomaru Y."/>
            <person name="Fukuda S."/>
            <person name="Kanamori-Katayama M."/>
            <person name="Suzuki M."/>
            <person name="Aoki J."/>
            <person name="Arakawa T."/>
            <person name="Iida J."/>
            <person name="Imamura K."/>
            <person name="Itoh M."/>
            <person name="Kato T."/>
            <person name="Kawaji H."/>
            <person name="Kawagashira N."/>
            <person name="Kawashima T."/>
            <person name="Kojima M."/>
            <person name="Kondo S."/>
            <person name="Konno H."/>
            <person name="Nakano K."/>
            <person name="Ninomiya N."/>
            <person name="Nishio T."/>
            <person name="Okada M."/>
            <person name="Plessy C."/>
            <person name="Shibata K."/>
            <person name="Shiraki T."/>
            <person name="Suzuki S."/>
            <person name="Tagami M."/>
            <person name="Waki K."/>
            <person name="Watahiki A."/>
            <person name="Okamura-Oho Y."/>
            <person name="Suzuki H."/>
            <person name="Kawai J."/>
            <person name="Hayashizaki Y."/>
        </authorList>
    </citation>
    <scope>NUCLEOTIDE SEQUENCE [LARGE SCALE MRNA]</scope>
    <source>
        <strain>C57BL/6J</strain>
        <tissue>Testis</tissue>
    </source>
</reference>
<reference key="2">
    <citation type="journal article" date="2004" name="Genome Res.">
        <title>The status, quality, and expansion of the NIH full-length cDNA project: the Mammalian Gene Collection (MGC).</title>
        <authorList>
            <consortium name="The MGC Project Team"/>
        </authorList>
    </citation>
    <scope>NUCLEOTIDE SEQUENCE [LARGE SCALE MRNA]</scope>
    <source>
        <strain>C57BL/6J</strain>
        <tissue>Brain</tissue>
    </source>
</reference>
<reference key="3">
    <citation type="journal article" date="2010" name="Cell">
        <title>A tissue-specific atlas of mouse protein phosphorylation and expression.</title>
        <authorList>
            <person name="Huttlin E.L."/>
            <person name="Jedrychowski M.P."/>
            <person name="Elias J.E."/>
            <person name="Goswami T."/>
            <person name="Rad R."/>
            <person name="Beausoleil S.A."/>
            <person name="Villen J."/>
            <person name="Haas W."/>
            <person name="Sowa M.E."/>
            <person name="Gygi S.P."/>
        </authorList>
    </citation>
    <scope>IDENTIFICATION BY MASS SPECTROMETRY [LARGE SCALE ANALYSIS]</scope>
    <source>
        <tissue>Brain</tissue>
        <tissue>Brown adipose tissue</tissue>
        <tissue>Lung</tissue>
        <tissue>Spleen</tissue>
        <tissue>Testis</tissue>
    </source>
</reference>
<reference key="4">
    <citation type="journal article" date="2017" name="Nat. Chem. Biol.">
        <title>DPP8 and DPP9 inhibition induces pro-caspase-1-dependent monocyte and macrophage pyroptosis.</title>
        <authorList>
            <person name="Okondo M.C."/>
            <person name="Johnson D.C."/>
            <person name="Sridharan R."/>
            <person name="Go E.B."/>
            <person name="Chui A.J."/>
            <person name="Wang M.S."/>
            <person name="Poplawski S.E."/>
            <person name="Wu W."/>
            <person name="Liu Y."/>
            <person name="Lai J.H."/>
            <person name="Sanford D.G."/>
            <person name="Arciprete M.O."/>
            <person name="Golub T.R."/>
            <person name="Bachovchin W.W."/>
            <person name="Bachovchin D.A."/>
        </authorList>
    </citation>
    <scope>FUNCTION</scope>
    <scope>ACTIVITY REGULATION</scope>
</reference>
<reference key="5">
    <citation type="journal article" date="2018" name="Cell Chem. Biol.">
        <title>Inhibition of Dpp8/9 activates the Nlrp1b inflammasome.</title>
        <authorList>
            <person name="Okondo M.C."/>
            <person name="Rao S.D."/>
            <person name="Taabazuing C.Y."/>
            <person name="Chui A.J."/>
            <person name="Poplawski S.E."/>
            <person name="Johnson D.C."/>
            <person name="Bachovchin D.A."/>
        </authorList>
    </citation>
    <scope>FUNCTION</scope>
    <scope>ACTIVITY REGULATION</scope>
</reference>
<comment type="function">
    <text evidence="1 2 3 4">Dipeptidyl peptidase that cleaves off N-terminal dipeptides from proteins having a Pro or Ala residue at position 2 (By similarity). Acts as a key inhibitor of caspase-1-dependent monocyte and macrophage pyroptosis in resting cells by preventing activation of NLRP1 and CARD8 (PubMed:27820798, PubMed:29396289). Sequesters the cleaved C-terminal part of NLRP1 and CARD8, which respectively constitute the active part of the NLRP1 and CARD8 inflammasomes, in a ternary complex, thereby preventing their oligomerization and activation (By similarity). The dipeptidyl peptidase activity is required to suppress NLRP1 and CARD8; however, neither NLRP1 nor CARD8 are bona fide substrates of DPP8, suggesting the existence of substrate(s) required for NLRP1 and CARD8 inhibition (By similarity).</text>
</comment>
<comment type="catalytic activity">
    <reaction evidence="1">
        <text>Release of an N-terminal dipeptide, Xaa-Yaa-|-Zaa-, from a polypeptide, preferentially when Yaa is Pro, provided Zaa is neither Pro nor hydroxyproline.</text>
        <dbReference type="EC" id="3.4.14.5"/>
    </reaction>
</comment>
<comment type="activity regulation">
    <text evidence="1 3 4">Inhibited by zinc (By similarity). Inhibited by the serine proteinase inhibitor 4-(2-aminoethyl)benzenesulphonyl fluoride (AEBSF), and by di-isopropylfluorophosphate (By similarity). Specifically inhibited by isoindoline derivatives (By similarity). Inhibited by Val-boroPro (Talabostat, PT-100), a non-selective inhibitor, which triggers pyroptosis in monocytes and macrophages (PubMed:27820798, PubMed:29396289).</text>
</comment>
<comment type="subunit">
    <text evidence="1 2">Homodimer (By similarity). Forms a ternary complex with NLRP1, composed of a DPP8 homodimer, one full-length NLRP1 protein, and one cleaved C-terminus of NLRP1 (NACHT, LRR and PYD domains-containing protein 1, C-terminus) (By similarity). Forms a ternary complex with CARD8, composed of a DPP8 homodimer, one full-length NLRP1 protein, and one cleaved C-terminus of CARD8 (Caspase recruitment domain-containing protein 8, C-terminus) (By similarity). In the ternary complex, only one subunit of the DPP8 homodimer is bound to NLRP1 or CARD8 (By similarity).</text>
</comment>
<comment type="subcellular location">
    <subcellularLocation>
        <location evidence="1">Cytoplasm</location>
    </subcellularLocation>
</comment>
<comment type="similarity">
    <text evidence="6">Belongs to the peptidase S9B family. DPPIV subfamily.</text>
</comment>
<proteinExistence type="evidence at protein level"/>
<dbReference type="EC" id="3.4.14.5" evidence="1"/>
<dbReference type="EMBL" id="AK016546">
    <property type="protein sequence ID" value="BAB30295.2"/>
    <property type="molecule type" value="mRNA"/>
</dbReference>
<dbReference type="EMBL" id="BC043124">
    <property type="protein sequence ID" value="AAH43124.1"/>
    <property type="molecule type" value="mRNA"/>
</dbReference>
<dbReference type="EMBL" id="BC059222">
    <property type="protein sequence ID" value="AAH59222.1"/>
    <property type="molecule type" value="mRNA"/>
</dbReference>
<dbReference type="CCDS" id="CCDS23285.1"/>
<dbReference type="RefSeq" id="NP_001388065.1">
    <property type="nucleotide sequence ID" value="NM_001401136.1"/>
</dbReference>
<dbReference type="RefSeq" id="NP_083182.2">
    <property type="nucleotide sequence ID" value="NM_028906.2"/>
</dbReference>
<dbReference type="SMR" id="Q80YA7"/>
<dbReference type="BioGRID" id="216712">
    <property type="interactions" value="7"/>
</dbReference>
<dbReference type="FunCoup" id="Q80YA7">
    <property type="interactions" value="3334"/>
</dbReference>
<dbReference type="STRING" id="10090.ENSMUSP00000034960"/>
<dbReference type="ESTHER" id="mouse-dpp8">
    <property type="family name" value="DPP4N_Peptidase_S9"/>
</dbReference>
<dbReference type="MEROPS" id="S09.018"/>
<dbReference type="iPTMnet" id="Q80YA7"/>
<dbReference type="PhosphoSitePlus" id="Q80YA7"/>
<dbReference type="SwissPalm" id="Q80YA7"/>
<dbReference type="PaxDb" id="10090-ENSMUSP00000034960"/>
<dbReference type="PeptideAtlas" id="Q80YA7"/>
<dbReference type="ProteomicsDB" id="277601"/>
<dbReference type="Pumba" id="Q80YA7"/>
<dbReference type="Antibodypedia" id="2238">
    <property type="antibodies" value="307 antibodies from 31 providers"/>
</dbReference>
<dbReference type="DNASU" id="74388"/>
<dbReference type="Ensembl" id="ENSMUST00000034960.14">
    <property type="protein sequence ID" value="ENSMUSP00000034960.7"/>
    <property type="gene ID" value="ENSMUSG00000032393.16"/>
</dbReference>
<dbReference type="Ensembl" id="ENSMUST00000167773.2">
    <property type="protein sequence ID" value="ENSMUSP00000126065.2"/>
    <property type="gene ID" value="ENSMUSG00000032393.16"/>
</dbReference>
<dbReference type="GeneID" id="74388"/>
<dbReference type="KEGG" id="mmu:74388"/>
<dbReference type="UCSC" id="uc009qcq.1">
    <property type="organism name" value="mouse"/>
</dbReference>
<dbReference type="AGR" id="MGI:1921638"/>
<dbReference type="CTD" id="54878"/>
<dbReference type="MGI" id="MGI:1921638">
    <property type="gene designation" value="Dpp8"/>
</dbReference>
<dbReference type="VEuPathDB" id="HostDB:ENSMUSG00000032393"/>
<dbReference type="eggNOG" id="KOG2281">
    <property type="taxonomic scope" value="Eukaryota"/>
</dbReference>
<dbReference type="GeneTree" id="ENSGT00940000160717"/>
<dbReference type="HOGENOM" id="CLU_006105_1_0_1"/>
<dbReference type="InParanoid" id="Q80YA7"/>
<dbReference type="OMA" id="PVTQWEL"/>
<dbReference type="OrthoDB" id="16520at2759"/>
<dbReference type="PhylomeDB" id="Q80YA7"/>
<dbReference type="TreeFam" id="TF313309"/>
<dbReference type="BioGRID-ORCS" id="74388">
    <property type="hits" value="4 hits in 79 CRISPR screens"/>
</dbReference>
<dbReference type="ChiTaRS" id="Dpp8">
    <property type="organism name" value="mouse"/>
</dbReference>
<dbReference type="PRO" id="PR:Q80YA7"/>
<dbReference type="Proteomes" id="UP000000589">
    <property type="component" value="Chromosome 9"/>
</dbReference>
<dbReference type="RNAct" id="Q80YA7">
    <property type="molecule type" value="protein"/>
</dbReference>
<dbReference type="Bgee" id="ENSMUSG00000032393">
    <property type="expression patterns" value="Expressed in spermatocyte and 258 other cell types or tissues"/>
</dbReference>
<dbReference type="ExpressionAtlas" id="Q80YA7">
    <property type="expression patterns" value="baseline and differential"/>
</dbReference>
<dbReference type="GO" id="GO:0005829">
    <property type="term" value="C:cytosol"/>
    <property type="evidence" value="ECO:0007669"/>
    <property type="project" value="Ensembl"/>
</dbReference>
<dbReference type="GO" id="GO:0004177">
    <property type="term" value="F:aminopeptidase activity"/>
    <property type="evidence" value="ECO:0007669"/>
    <property type="project" value="UniProtKB-KW"/>
</dbReference>
<dbReference type="GO" id="GO:0008239">
    <property type="term" value="F:dipeptidyl-peptidase activity"/>
    <property type="evidence" value="ECO:0000250"/>
    <property type="project" value="UniProtKB"/>
</dbReference>
<dbReference type="GO" id="GO:0008236">
    <property type="term" value="F:serine-type peptidase activity"/>
    <property type="evidence" value="ECO:0007669"/>
    <property type="project" value="UniProtKB-KW"/>
</dbReference>
<dbReference type="GO" id="GO:0043069">
    <property type="term" value="P:negative regulation of programmed cell death"/>
    <property type="evidence" value="ECO:0007669"/>
    <property type="project" value="Ensembl"/>
</dbReference>
<dbReference type="GO" id="GO:0006508">
    <property type="term" value="P:proteolysis"/>
    <property type="evidence" value="ECO:0007669"/>
    <property type="project" value="UniProtKB-KW"/>
</dbReference>
<dbReference type="FunFam" id="2.140.10.30:FF:000002">
    <property type="entry name" value="Dipeptidyl peptidase 8-like isoform"/>
    <property type="match status" value="1"/>
</dbReference>
<dbReference type="FunFam" id="3.40.50.1820:FF:000016">
    <property type="entry name" value="Dipeptidyl peptidase 8-like isoform"/>
    <property type="match status" value="1"/>
</dbReference>
<dbReference type="Gene3D" id="3.40.50.1820">
    <property type="entry name" value="alpha/beta hydrolase"/>
    <property type="match status" value="1"/>
</dbReference>
<dbReference type="Gene3D" id="2.140.10.30">
    <property type="entry name" value="Dipeptidylpeptidase IV, N-terminal domain"/>
    <property type="match status" value="1"/>
</dbReference>
<dbReference type="InterPro" id="IPR029058">
    <property type="entry name" value="AB_hydrolase_fold"/>
</dbReference>
<dbReference type="InterPro" id="IPR045785">
    <property type="entry name" value="Dpp_8/9_N"/>
</dbReference>
<dbReference type="InterPro" id="IPR001375">
    <property type="entry name" value="Peptidase_S9_cat"/>
</dbReference>
<dbReference type="InterPro" id="IPR002469">
    <property type="entry name" value="Peptidase_S9B_N"/>
</dbReference>
<dbReference type="InterPro" id="IPR050278">
    <property type="entry name" value="Serine_Prot_S9B/DPPIV"/>
</dbReference>
<dbReference type="PANTHER" id="PTHR11731:SF98">
    <property type="entry name" value="DIPEPTIDYL PEPTIDASE 8"/>
    <property type="match status" value="1"/>
</dbReference>
<dbReference type="PANTHER" id="PTHR11731">
    <property type="entry name" value="PROTEASE FAMILY S9B,C DIPEPTIDYL-PEPTIDASE IV-RELATED"/>
    <property type="match status" value="1"/>
</dbReference>
<dbReference type="Pfam" id="PF19520">
    <property type="entry name" value="Dpp_8_9_N"/>
    <property type="match status" value="1"/>
</dbReference>
<dbReference type="Pfam" id="PF00930">
    <property type="entry name" value="DPPIV_N"/>
    <property type="match status" value="1"/>
</dbReference>
<dbReference type="Pfam" id="PF00326">
    <property type="entry name" value="Peptidase_S9"/>
    <property type="match status" value="1"/>
</dbReference>
<dbReference type="SUPFAM" id="SSF53474">
    <property type="entry name" value="alpha/beta-Hydrolases"/>
    <property type="match status" value="1"/>
</dbReference>
<dbReference type="SUPFAM" id="SSF82171">
    <property type="entry name" value="DPP6 N-terminal domain-like"/>
    <property type="match status" value="1"/>
</dbReference>
<evidence type="ECO:0000250" key="1">
    <source>
        <dbReference type="UniProtKB" id="Q6V1X1"/>
    </source>
</evidence>
<evidence type="ECO:0000250" key="2">
    <source>
        <dbReference type="UniProtKB" id="Q86TI2"/>
    </source>
</evidence>
<evidence type="ECO:0000269" key="3">
    <source>
    </source>
</evidence>
<evidence type="ECO:0000269" key="4">
    <source>
    </source>
</evidence>
<evidence type="ECO:0000303" key="5">
    <source>
    </source>
</evidence>
<evidence type="ECO:0000305" key="6"/>
<evidence type="ECO:0000312" key="7">
    <source>
        <dbReference type="MGI" id="MGI:1921638"/>
    </source>
</evidence>
<protein>
    <recommendedName>
        <fullName evidence="5">Dipeptidyl peptidase 8</fullName>
        <shortName>DP8</shortName>
        <ecNumber evidence="1">3.4.14.5</ecNumber>
    </recommendedName>
    <alternativeName>
        <fullName>Dipeptidyl peptidase VIII</fullName>
        <shortName>DPP VIII</shortName>
    </alternativeName>
</protein>
<sequence length="892" mass="102186">MKIPSGRCNMAAAMETEQLGVEIFETAECEEGNGESQDRPKLEPFYVERYSWSQLKKLLADTRKYHGYMMAKAPHDFMFVKRTDPDGPHSDRVYYLAMSGENRENTLFYSEIPKTINRAAVLMLSWKPLLDLFQATLDYGMYSREEELLRERKRIGTVGIAAYDYHPGSGTFLFQAGSGIYHIKDGGPHGFTQQPLRPNLVETSCPNIRMDPKLCPADPDWIAFIHSNDIWISNLVTREERRITYVHNELANMEEDPRSAGVATFVLQEEFDRYSGYWWCPQAERTPSGGKILRILYEENDESEVEIIHVTSPMLETRRADSFRYPKTGTANPKVTFKMSEIVVDAAGGIIDVIDKELVQPFEILFEGVEYIARAGWTPEGKHAWSILLDRSQTHLQIVLISPELFIPVEDDAMDRQRLIESVPDSVTPLIIYEETTDIWINIHDIFHVFPQTHEDEIEFIFASECKTGFRHLYKITSILKESKYKRSSGGLPAPSDFKCPIKEEITITSGEWEVLGRHGSNIWVDEARKLVYFEGTKDSPLEHHLYVTSYANPGEVVRLTDRGYSHSCCLSRHCDFFISKYSNQKNPHCVSLYKLSSPEDDPVHKTKEFWATILDSAGPLPDYTPPEIFSFESTTGFTLYGMLYKPHDLQPGKKYPTVLFIYGGPQVQLVNNRFKGVKYFRLNTLASLGYVVVVIDNRGSCHRGLKFEGAFKYKMGQIEIDDQVEGLQYLASQYDFIDLDRVGIHGWSYGGYLSLMALMQRSDIFRVAIAGAPVTLWIFYDTGYTERYMGHPDQNEQGYYLGSVAMQAEKFPSEPNRLLLLHGFLDENVHFAHTSILLSFLVRAGKPYDLQIYPQERHSIRVPESGEHYELHLLHYLQENLGSRIAALKVI</sequence>
<feature type="chain" id="PRO_0000122414" description="Dipeptidyl peptidase 8">
    <location>
        <begin position="1"/>
        <end position="892"/>
    </location>
</feature>
<feature type="active site" description="Charge relay system" evidence="1">
    <location>
        <position position="749"/>
    </location>
</feature>
<feature type="active site" description="Charge relay system" evidence="1">
    <location>
        <position position="827"/>
    </location>
</feature>
<feature type="active site" description="Charge relay system" evidence="1">
    <location>
        <position position="859"/>
    </location>
</feature>
<feature type="sequence conflict" description="In Ref. 1; BAB30295." evidence="6" ref="1">
    <original>G</original>
    <variation>R</variation>
    <location>
        <position position="87"/>
    </location>
</feature>
<gene>
    <name evidence="5 7" type="primary">Dpp8</name>
</gene>
<organism>
    <name type="scientific">Mus musculus</name>
    <name type="common">Mouse</name>
    <dbReference type="NCBI Taxonomy" id="10090"/>
    <lineage>
        <taxon>Eukaryota</taxon>
        <taxon>Metazoa</taxon>
        <taxon>Chordata</taxon>
        <taxon>Craniata</taxon>
        <taxon>Vertebrata</taxon>
        <taxon>Euteleostomi</taxon>
        <taxon>Mammalia</taxon>
        <taxon>Eutheria</taxon>
        <taxon>Euarchontoglires</taxon>
        <taxon>Glires</taxon>
        <taxon>Rodentia</taxon>
        <taxon>Myomorpha</taxon>
        <taxon>Muroidea</taxon>
        <taxon>Muridae</taxon>
        <taxon>Murinae</taxon>
        <taxon>Mus</taxon>
        <taxon>Mus</taxon>
    </lineage>
</organism>